<sequence length="125" mass="14573">MSDQHDERRRFHRIAFDADSEILQGERRWEVLLHDVSLHGILVGQPQDWNGDPQRPFEARLYLGLDVLIRMEISLAWARDGLLGFECQHIDLDSISHLRRLVELNLGDEELLERELALLVSAHDD</sequence>
<protein>
    <recommendedName>
        <fullName evidence="5 6 7">Cyclic diguanosine monophosphate-binding protein PA4608</fullName>
        <shortName evidence="5 6 7">c-di-GMP-binding protein PA4608</shortName>
    </recommendedName>
    <alternativeName>
        <fullName evidence="5 6 7">Pilz domain-containing protein PA4608</fullName>
    </alternativeName>
</protein>
<name>CDGBP_PSEAE</name>
<reference evidence="9" key="1">
    <citation type="journal article" date="2000" name="Nature">
        <title>Complete genome sequence of Pseudomonas aeruginosa PAO1, an opportunistic pathogen.</title>
        <authorList>
            <person name="Stover C.K."/>
            <person name="Pham X.-Q.T."/>
            <person name="Erwin A.L."/>
            <person name="Mizoguchi S.D."/>
            <person name="Warrener P."/>
            <person name="Hickey M.J."/>
            <person name="Brinkman F.S.L."/>
            <person name="Hufnagle W.O."/>
            <person name="Kowalik D.J."/>
            <person name="Lagrou M."/>
            <person name="Garber R.L."/>
            <person name="Goltry L."/>
            <person name="Tolentino E."/>
            <person name="Westbrock-Wadman S."/>
            <person name="Yuan Y."/>
            <person name="Brody L.L."/>
            <person name="Coulter S.N."/>
            <person name="Folger K.R."/>
            <person name="Kas A."/>
            <person name="Larbig K."/>
            <person name="Lim R.M."/>
            <person name="Smith K.A."/>
            <person name="Spencer D.H."/>
            <person name="Wong G.K.-S."/>
            <person name="Wu Z."/>
            <person name="Paulsen I.T."/>
            <person name="Reizer J."/>
            <person name="Saier M.H. Jr."/>
            <person name="Hancock R.E.W."/>
            <person name="Lory S."/>
            <person name="Olson M.V."/>
        </authorList>
    </citation>
    <scope>NUCLEOTIDE SEQUENCE [LARGE SCALE GENOMIC DNA]</scope>
    <source>
        <strain>ATCC 15692 / DSM 22644 / CIP 104116 / JCM 14847 / LMG 12228 / 1C / PRS 101 / PAO1</strain>
    </source>
</reference>
<reference evidence="8 10" key="2">
    <citation type="journal article" date="2007" name="Proteins">
        <title>NMR structure and binding studies confirm that PA4608 from Pseudomonas aeruginosa is a PilZ domain and a c-di-GMP binding protein.</title>
        <authorList>
            <person name="Ramelot T.A."/>
            <person name="Yee A."/>
            <person name="Cort J.R."/>
            <person name="Semesi A."/>
            <person name="Arrowsmith C.H."/>
            <person name="Kennedy M.A."/>
        </authorList>
    </citation>
    <scope>STRUCTURE BY NMR (APO-FORM)</scope>
    <scope>FUNCTION</scope>
    <scope>SUBUNIT</scope>
    <scope>DOMAIN</scope>
    <scope>C-DI-GMP BINDING</scope>
    <source>
        <strain evidence="2">ATCC 15692 / DSM 22644 / CIP 104116 / JCM 14847 / LMG 12228 / 1C / PRS 101 / PAO1</strain>
    </source>
</reference>
<reference evidence="8 11" key="3">
    <citation type="journal article" date="2011" name="J. Biol. Chem.">
        <title>Solution structure of the PilZ domain protein PA4608 complex with cyclic di-GMP identifies charge clustering as molecular readout.</title>
        <authorList>
            <person name="Habazettl J."/>
            <person name="Allan M.G."/>
            <person name="Jenal U."/>
            <person name="Grzesiek S."/>
        </authorList>
    </citation>
    <scope>STRUCTURE BY NMR IN COMPLEX WITH C-DI-GMP (HOLO-FORM)</scope>
    <scope>FUNCTION</scope>
    <scope>SUBUNIT</scope>
    <scope>DOMAIN</scope>
    <scope>MOTIF</scope>
</reference>
<reference evidence="8" key="4">
    <citation type="journal article" date="2011" name="Protein Sci.">
        <title>Structural characterization reveals that a PilZ domain protein undergoes substantial conformational change upon binding to cyclic dimeric guanosine monophosphate.</title>
        <authorList>
            <person name="Shin J.S."/>
            <person name="Ryu K.S."/>
            <person name="Ko J."/>
            <person name="Lee A."/>
            <person name="Choi B.S."/>
        </authorList>
    </citation>
    <scope>STRUCTURE BY NMR</scope>
    <scope>FUNCTION</scope>
    <scope>SUBUNIT</scope>
    <scope>DOMAIN</scope>
    <scope>MOTIF</scope>
    <scope>SITE</scope>
    <scope>MUTAGENESIS OF ARG-9; ARG-13 AND GLY-40</scope>
</reference>
<feature type="chain" id="PRO_0000423181" description="Cyclic diguanosine monophosphate-binding protein PA4608">
    <location>
        <begin position="1"/>
        <end position="125"/>
    </location>
</feature>
<feature type="domain" description="PilZ" evidence="1">
    <location>
        <begin position="7"/>
        <end position="103"/>
    </location>
</feature>
<feature type="short sequence motif" description="RXXXR motif; surrounds the surface of the c-di-GMP binding site" evidence="3 4">
    <location>
        <begin position="9"/>
        <end position="13"/>
    </location>
</feature>
<feature type="short sequence motif" description="DXSXXG motif; surrounds the surface of the c-di-GMP binding site" evidence="3 4">
    <location>
        <begin position="35"/>
        <end position="40"/>
    </location>
</feature>
<feature type="binding site" evidence="4">
    <location>
        <begin position="6"/>
        <end position="13"/>
    </location>
    <ligand>
        <name>3',3'-c-di-GMP</name>
        <dbReference type="ChEBI" id="CHEBI:58805"/>
    </ligand>
</feature>
<feature type="binding site" evidence="4">
    <location>
        <position position="77"/>
    </location>
    <ligand>
        <name>3',3'-c-di-GMP</name>
        <dbReference type="ChEBI" id="CHEBI:58805"/>
    </ligand>
</feature>
<feature type="site" description="Important for c-di-GMP binding">
    <location>
        <position position="40"/>
    </location>
</feature>
<feature type="mutagenesis site" description="Abolishes c-di-GMP binding." evidence="3">
    <original>R</original>
    <variation>A</variation>
    <location>
        <position position="9"/>
    </location>
</feature>
<feature type="mutagenesis site" description="Abolishes c-di-GMP binding." evidence="3">
    <original>R</original>
    <variation>A</variation>
    <location>
        <position position="13"/>
    </location>
</feature>
<feature type="mutagenesis site" description="Abolishes c-di-GMP binding." evidence="3">
    <original>G</original>
    <variation>A</variation>
    <location>
        <position position="40"/>
    </location>
</feature>
<feature type="turn" evidence="12">
    <location>
        <begin position="3"/>
        <end position="6"/>
    </location>
</feature>
<feature type="strand" evidence="12">
    <location>
        <begin position="9"/>
        <end position="11"/>
    </location>
</feature>
<feature type="strand" evidence="13">
    <location>
        <begin position="19"/>
        <end position="24"/>
    </location>
</feature>
<feature type="strand" evidence="13">
    <location>
        <begin position="27"/>
        <end position="31"/>
    </location>
</feature>
<feature type="strand" evidence="13">
    <location>
        <begin position="33"/>
        <end position="37"/>
    </location>
</feature>
<feature type="strand" evidence="13">
    <location>
        <begin position="40"/>
        <end position="44"/>
    </location>
</feature>
<feature type="strand" evidence="13">
    <location>
        <begin position="57"/>
        <end position="63"/>
    </location>
</feature>
<feature type="turn" evidence="13">
    <location>
        <begin position="64"/>
        <end position="66"/>
    </location>
</feature>
<feature type="strand" evidence="13">
    <location>
        <begin position="67"/>
        <end position="79"/>
    </location>
</feature>
<feature type="strand" evidence="13">
    <location>
        <begin position="82"/>
        <end position="91"/>
    </location>
</feature>
<feature type="helix" evidence="13">
    <location>
        <begin position="92"/>
        <end position="106"/>
    </location>
</feature>
<feature type="helix" evidence="13">
    <location>
        <begin position="109"/>
        <end position="120"/>
    </location>
</feature>
<feature type="turn" evidence="13">
    <location>
        <begin position="121"/>
        <end position="123"/>
    </location>
</feature>
<comment type="function">
    <text evidence="2 3 4">Binds the second messenger bis-(3'-5') cyclic dimeric guanosine monophosphate (c-di-GMP). Can bind two c-di-GMP molecules per monomer. May play a role in bacterial second-messenger regulated processes. Binding to c-di-GMP induces a conformational change of the C- and N-termini resulting in the exposure of a highly negative surface on one side of the protein to a possible effector protein.</text>
</comment>
<comment type="subunit">
    <text evidence="2 3 4">Monomer in both c-di-GMP-bound and free forms.</text>
</comment>
<comment type="domain">
    <text evidence="2 3 4">Consists of a six-stranded anti-parallel beta-barrel core structure with an unstructured N-terminus in apo-form and a C-terminal alpha helix. In the holo-form the C-terminal helix is displaced by the ligand, thereby opening one side of the beta-barrel as a binding site, and the N-terminus containing the RXXXR motif wraps around the ligand and in turn ties the C-terminal helix in a loose conformation. The structural rearrangement upon ligand binding creates a significant change in surface charge distribution.</text>
</comment>
<evidence type="ECO:0000255" key="1"/>
<evidence type="ECO:0000269" key="2">
    <source>
    </source>
</evidence>
<evidence type="ECO:0000269" key="3">
    <source>
    </source>
</evidence>
<evidence type="ECO:0000269" key="4">
    <source>
    </source>
</evidence>
<evidence type="ECO:0000303" key="5">
    <source>
    </source>
</evidence>
<evidence type="ECO:0000303" key="6">
    <source>
    </source>
</evidence>
<evidence type="ECO:0000303" key="7">
    <source>
    </source>
</evidence>
<evidence type="ECO:0000305" key="8"/>
<evidence type="ECO:0000312" key="9">
    <source>
        <dbReference type="EMBL" id="AAG07996.1"/>
    </source>
</evidence>
<evidence type="ECO:0000312" key="10">
    <source>
        <dbReference type="PDB" id="1YWU"/>
    </source>
</evidence>
<evidence type="ECO:0000312" key="11">
    <source>
        <dbReference type="PDB" id="2L74"/>
    </source>
</evidence>
<evidence type="ECO:0007829" key="12">
    <source>
        <dbReference type="PDB" id="2L74"/>
    </source>
</evidence>
<evidence type="ECO:0007829" key="13">
    <source>
        <dbReference type="PDB" id="5XLY"/>
    </source>
</evidence>
<dbReference type="EMBL" id="AE004091">
    <property type="protein sequence ID" value="AAG07996.1"/>
    <property type="molecule type" value="Genomic_DNA"/>
</dbReference>
<dbReference type="PIR" id="H83068">
    <property type="entry name" value="H83068"/>
</dbReference>
<dbReference type="RefSeq" id="NP_253298.1">
    <property type="nucleotide sequence ID" value="NC_002516.2"/>
</dbReference>
<dbReference type="PDB" id="1YWU">
    <property type="method" value="NMR"/>
    <property type="chains" value="A=1-125"/>
</dbReference>
<dbReference type="PDB" id="2L74">
    <property type="method" value="NMR"/>
    <property type="chains" value="A=1-125"/>
</dbReference>
<dbReference type="PDB" id="5XLY">
    <property type="method" value="X-ray"/>
    <property type="resolution" value="1.76 A"/>
    <property type="chains" value="B=1-125"/>
</dbReference>
<dbReference type="PDB" id="5Y4R">
    <property type="method" value="X-ray"/>
    <property type="resolution" value="2.30 A"/>
    <property type="chains" value="C/D=2-125"/>
</dbReference>
<dbReference type="PDBsum" id="1YWU"/>
<dbReference type="PDBsum" id="2L74"/>
<dbReference type="PDBsum" id="5XLY"/>
<dbReference type="PDBsum" id="5Y4R"/>
<dbReference type="BMRB" id="Q9HVI1"/>
<dbReference type="SMR" id="Q9HVI1"/>
<dbReference type="STRING" id="208964.PA4608"/>
<dbReference type="PaxDb" id="208964-PA4608"/>
<dbReference type="DNASU" id="881102"/>
<dbReference type="GeneID" id="881102"/>
<dbReference type="KEGG" id="pae:PA4608"/>
<dbReference type="PATRIC" id="fig|208964.12.peg.4823"/>
<dbReference type="PseudoCAP" id="PA4608"/>
<dbReference type="HOGENOM" id="CLU_146776_0_1_6"/>
<dbReference type="InParanoid" id="Q9HVI1"/>
<dbReference type="OrthoDB" id="5298508at2"/>
<dbReference type="PhylomeDB" id="Q9HVI1"/>
<dbReference type="BioCyc" id="PAER208964:G1FZ6-4702-MONOMER"/>
<dbReference type="EvolutionaryTrace" id="Q9HVI1"/>
<dbReference type="Proteomes" id="UP000002438">
    <property type="component" value="Chromosome"/>
</dbReference>
<dbReference type="GO" id="GO:0035438">
    <property type="term" value="F:cyclic-di-GMP binding"/>
    <property type="evidence" value="ECO:0000314"/>
    <property type="project" value="UniProtKB"/>
</dbReference>
<dbReference type="Gene3D" id="2.40.10.220">
    <property type="entry name" value="predicted glycosyltransferase like domains"/>
    <property type="match status" value="1"/>
</dbReference>
<dbReference type="InterPro" id="IPR027021">
    <property type="entry name" value="C-di-GMP_BP_PA4608"/>
</dbReference>
<dbReference type="InterPro" id="IPR009875">
    <property type="entry name" value="PilZ_domain"/>
</dbReference>
<dbReference type="Pfam" id="PF07238">
    <property type="entry name" value="PilZ"/>
    <property type="match status" value="1"/>
</dbReference>
<dbReference type="PIRSF" id="PIRSF028141">
    <property type="entry name" value="C-di-GMP_BP_PA4608"/>
    <property type="match status" value="1"/>
</dbReference>
<dbReference type="SUPFAM" id="SSF141371">
    <property type="entry name" value="PilZ domain-like"/>
    <property type="match status" value="1"/>
</dbReference>
<organism>
    <name type="scientific">Pseudomonas aeruginosa (strain ATCC 15692 / DSM 22644 / CIP 104116 / JCM 14847 / LMG 12228 / 1C / PRS 101 / PAO1)</name>
    <dbReference type="NCBI Taxonomy" id="208964"/>
    <lineage>
        <taxon>Bacteria</taxon>
        <taxon>Pseudomonadati</taxon>
        <taxon>Pseudomonadota</taxon>
        <taxon>Gammaproteobacteria</taxon>
        <taxon>Pseudomonadales</taxon>
        <taxon>Pseudomonadaceae</taxon>
        <taxon>Pseudomonas</taxon>
    </lineage>
</organism>
<proteinExistence type="evidence at protein level"/>
<accession>Q9HVI1</accession>
<keyword id="KW-0002">3D-structure</keyword>
<keyword id="KW-0973">c-di-GMP</keyword>
<keyword id="KW-0547">Nucleotide-binding</keyword>
<keyword id="KW-1185">Reference proteome</keyword>
<gene>
    <name type="ordered locus">PA4608</name>
</gene>